<protein>
    <recommendedName>
        <fullName evidence="1">Phenylalanine--tRNA ligase alpha subunit</fullName>
        <ecNumber evidence="1">6.1.1.20</ecNumber>
    </recommendedName>
    <alternativeName>
        <fullName evidence="1">Phenylalanyl-tRNA synthetase alpha subunit</fullName>
        <shortName evidence="1">PheRS</shortName>
    </alternativeName>
</protein>
<evidence type="ECO:0000255" key="1">
    <source>
        <dbReference type="HAMAP-Rule" id="MF_00281"/>
    </source>
</evidence>
<organism>
    <name type="scientific">Wolbachia sp. subsp. Brugia malayi (strain TRS)</name>
    <dbReference type="NCBI Taxonomy" id="292805"/>
    <lineage>
        <taxon>Bacteria</taxon>
        <taxon>Pseudomonadati</taxon>
        <taxon>Pseudomonadota</taxon>
        <taxon>Alphaproteobacteria</taxon>
        <taxon>Rickettsiales</taxon>
        <taxon>Anaplasmataceae</taxon>
        <taxon>Wolbachieae</taxon>
        <taxon>Wolbachia</taxon>
    </lineage>
</organism>
<gene>
    <name evidence="1" type="primary">pheS</name>
    <name type="ordered locus">Wbm0087</name>
</gene>
<feature type="chain" id="PRO_0000232038" description="Phenylalanine--tRNA ligase alpha subunit">
    <location>
        <begin position="1"/>
        <end position="347"/>
    </location>
</feature>
<feature type="binding site" evidence="1">
    <location>
        <position position="265"/>
    </location>
    <ligand>
        <name>Mg(2+)</name>
        <dbReference type="ChEBI" id="CHEBI:18420"/>
        <note>shared with beta subunit</note>
    </ligand>
</feature>
<proteinExistence type="inferred from homology"/>
<keyword id="KW-0030">Aminoacyl-tRNA synthetase</keyword>
<keyword id="KW-0067">ATP-binding</keyword>
<keyword id="KW-0963">Cytoplasm</keyword>
<keyword id="KW-0436">Ligase</keyword>
<keyword id="KW-0460">Magnesium</keyword>
<keyword id="KW-0479">Metal-binding</keyword>
<keyword id="KW-0547">Nucleotide-binding</keyword>
<keyword id="KW-0648">Protein biosynthesis</keyword>
<keyword id="KW-1185">Reference proteome</keyword>
<dbReference type="EC" id="6.1.1.20" evidence="1"/>
<dbReference type="EMBL" id="AE017321">
    <property type="protein sequence ID" value="AAW70679.1"/>
    <property type="molecule type" value="Genomic_DNA"/>
</dbReference>
<dbReference type="RefSeq" id="WP_011256289.1">
    <property type="nucleotide sequence ID" value="NC_006833.1"/>
</dbReference>
<dbReference type="SMR" id="Q5GTJ5"/>
<dbReference type="STRING" id="292805.Wbm0087"/>
<dbReference type="KEGG" id="wbm:Wbm0087"/>
<dbReference type="eggNOG" id="COG0016">
    <property type="taxonomic scope" value="Bacteria"/>
</dbReference>
<dbReference type="HOGENOM" id="CLU_025086_0_1_5"/>
<dbReference type="Proteomes" id="UP000000534">
    <property type="component" value="Chromosome"/>
</dbReference>
<dbReference type="GO" id="GO:0005737">
    <property type="term" value="C:cytoplasm"/>
    <property type="evidence" value="ECO:0007669"/>
    <property type="project" value="UniProtKB-SubCell"/>
</dbReference>
<dbReference type="GO" id="GO:0005524">
    <property type="term" value="F:ATP binding"/>
    <property type="evidence" value="ECO:0007669"/>
    <property type="project" value="UniProtKB-UniRule"/>
</dbReference>
<dbReference type="GO" id="GO:0000287">
    <property type="term" value="F:magnesium ion binding"/>
    <property type="evidence" value="ECO:0007669"/>
    <property type="project" value="UniProtKB-UniRule"/>
</dbReference>
<dbReference type="GO" id="GO:0004826">
    <property type="term" value="F:phenylalanine-tRNA ligase activity"/>
    <property type="evidence" value="ECO:0007669"/>
    <property type="project" value="UniProtKB-UniRule"/>
</dbReference>
<dbReference type="GO" id="GO:0000049">
    <property type="term" value="F:tRNA binding"/>
    <property type="evidence" value="ECO:0007669"/>
    <property type="project" value="InterPro"/>
</dbReference>
<dbReference type="GO" id="GO:0006432">
    <property type="term" value="P:phenylalanyl-tRNA aminoacylation"/>
    <property type="evidence" value="ECO:0007669"/>
    <property type="project" value="UniProtKB-UniRule"/>
</dbReference>
<dbReference type="CDD" id="cd00496">
    <property type="entry name" value="PheRS_alpha_core"/>
    <property type="match status" value="1"/>
</dbReference>
<dbReference type="Gene3D" id="3.30.930.10">
    <property type="entry name" value="Bira Bifunctional Protein, Domain 2"/>
    <property type="match status" value="1"/>
</dbReference>
<dbReference type="HAMAP" id="MF_00281">
    <property type="entry name" value="Phe_tRNA_synth_alpha1"/>
    <property type="match status" value="1"/>
</dbReference>
<dbReference type="InterPro" id="IPR006195">
    <property type="entry name" value="aa-tRNA-synth_II"/>
</dbReference>
<dbReference type="InterPro" id="IPR045864">
    <property type="entry name" value="aa-tRNA-synth_II/BPL/LPL"/>
</dbReference>
<dbReference type="InterPro" id="IPR004529">
    <property type="entry name" value="Phe-tRNA-synth_IIc_asu"/>
</dbReference>
<dbReference type="InterPro" id="IPR004188">
    <property type="entry name" value="Phe-tRNA_ligase_II_N"/>
</dbReference>
<dbReference type="InterPro" id="IPR022911">
    <property type="entry name" value="Phe_tRNA_ligase_alpha1_bac"/>
</dbReference>
<dbReference type="InterPro" id="IPR002319">
    <property type="entry name" value="Phenylalanyl-tRNA_Synthase"/>
</dbReference>
<dbReference type="InterPro" id="IPR010978">
    <property type="entry name" value="tRNA-bd_arm"/>
</dbReference>
<dbReference type="NCBIfam" id="TIGR00468">
    <property type="entry name" value="pheS"/>
    <property type="match status" value="1"/>
</dbReference>
<dbReference type="PANTHER" id="PTHR11538:SF41">
    <property type="entry name" value="PHENYLALANINE--TRNA LIGASE, MITOCHONDRIAL"/>
    <property type="match status" value="1"/>
</dbReference>
<dbReference type="PANTHER" id="PTHR11538">
    <property type="entry name" value="PHENYLALANYL-TRNA SYNTHETASE"/>
    <property type="match status" value="1"/>
</dbReference>
<dbReference type="Pfam" id="PF02912">
    <property type="entry name" value="Phe_tRNA-synt_N"/>
    <property type="match status" value="1"/>
</dbReference>
<dbReference type="Pfam" id="PF01409">
    <property type="entry name" value="tRNA-synt_2d"/>
    <property type="match status" value="1"/>
</dbReference>
<dbReference type="SUPFAM" id="SSF55681">
    <property type="entry name" value="Class II aaRS and biotin synthetases"/>
    <property type="match status" value="1"/>
</dbReference>
<dbReference type="SUPFAM" id="SSF46589">
    <property type="entry name" value="tRNA-binding arm"/>
    <property type="match status" value="1"/>
</dbReference>
<dbReference type="PROSITE" id="PS50862">
    <property type="entry name" value="AA_TRNA_LIGASE_II"/>
    <property type="match status" value="1"/>
</dbReference>
<name>SYFA_WOLTR</name>
<comment type="catalytic activity">
    <reaction evidence="1">
        <text>tRNA(Phe) + L-phenylalanine + ATP = L-phenylalanyl-tRNA(Phe) + AMP + diphosphate + H(+)</text>
        <dbReference type="Rhea" id="RHEA:19413"/>
        <dbReference type="Rhea" id="RHEA-COMP:9668"/>
        <dbReference type="Rhea" id="RHEA-COMP:9699"/>
        <dbReference type="ChEBI" id="CHEBI:15378"/>
        <dbReference type="ChEBI" id="CHEBI:30616"/>
        <dbReference type="ChEBI" id="CHEBI:33019"/>
        <dbReference type="ChEBI" id="CHEBI:58095"/>
        <dbReference type="ChEBI" id="CHEBI:78442"/>
        <dbReference type="ChEBI" id="CHEBI:78531"/>
        <dbReference type="ChEBI" id="CHEBI:456215"/>
        <dbReference type="EC" id="6.1.1.20"/>
    </reaction>
</comment>
<comment type="cofactor">
    <cofactor evidence="1">
        <name>Mg(2+)</name>
        <dbReference type="ChEBI" id="CHEBI:18420"/>
    </cofactor>
    <text evidence="1">Binds 2 magnesium ions per tetramer.</text>
</comment>
<comment type="subunit">
    <text evidence="1">Tetramer of two alpha and two beta subunits.</text>
</comment>
<comment type="subcellular location">
    <subcellularLocation>
        <location evidence="1">Cytoplasm</location>
    </subcellularLocation>
</comment>
<comment type="similarity">
    <text evidence="1">Belongs to the class-II aminoacyl-tRNA synthetase family. Phe-tRNA synthetase alpha subunit type 1 subfamily.</text>
</comment>
<accession>Q5GTJ5</accession>
<sequence>MNEELLNEIPLLEDKAVFEIESASSLQDLEKVRLSYLGRKGVIKAYFDDLRKVEDTEKKRDLGAIINVLRNKLDQLIMNKESILKAEEVNFKLQNEAIDITLPVRPEKIGRAHPLSKVMNEVKLIFAHMGFRAVNGPDIEDEFHVFDALNTPSHHPAREEQDTFYLKNKINDKRMMLRTHTSSMQIRAMKKAKTFPIKIVAAGRVYRNDFDATHTPMFHQMEGLYVNENVNMGQLKFTIHHFLNKFFGDKELKIRFRNSFFPFTEPSAEVDISYKESKWIEVLGCGIVHPNVFQNVGIDHTKYSGFAFGIGIERLAMLKYQISDLRNFYDNKISWLSHYGFHFSSLR</sequence>
<reference key="1">
    <citation type="journal article" date="2005" name="PLoS Biol.">
        <title>The Wolbachia genome of Brugia malayi: endosymbiont evolution within a human pathogenic nematode.</title>
        <authorList>
            <person name="Foster J."/>
            <person name="Ganatra M."/>
            <person name="Kamal I."/>
            <person name="Ware J."/>
            <person name="Makarova K."/>
            <person name="Ivanova N."/>
            <person name="Bhattacharyya A."/>
            <person name="Kapatral V."/>
            <person name="Kumar S."/>
            <person name="Posfai J."/>
            <person name="Vincze T."/>
            <person name="Ingram J."/>
            <person name="Moran L."/>
            <person name="Lapidus A."/>
            <person name="Omelchenko M."/>
            <person name="Kyrpides N."/>
            <person name="Ghedin E."/>
            <person name="Wang S."/>
            <person name="Goltsman E."/>
            <person name="Joukov V."/>
            <person name="Ostrovskaya O."/>
            <person name="Tsukerman K."/>
            <person name="Mazur M."/>
            <person name="Comb D."/>
            <person name="Koonin E."/>
            <person name="Slatko B."/>
        </authorList>
    </citation>
    <scope>NUCLEOTIDE SEQUENCE [LARGE SCALE GENOMIC DNA]</scope>
    <source>
        <strain>TRS</strain>
    </source>
</reference>